<evidence type="ECO:0000255" key="1">
    <source>
        <dbReference type="HAMAP-Rule" id="MF_01968"/>
    </source>
</evidence>
<evidence type="ECO:0000255" key="2">
    <source>
        <dbReference type="PROSITE-ProRule" id="PRU00236"/>
    </source>
</evidence>
<protein>
    <recommendedName>
        <fullName evidence="1">NAD-dependent protein deacetylase 2</fullName>
        <ecNumber evidence="1 2">2.3.1.286</ecNumber>
    </recommendedName>
    <alternativeName>
        <fullName evidence="1">Regulatory protein SIR2 homolog 2</fullName>
    </alternativeName>
</protein>
<gene>
    <name evidence="1" type="primary">cobB2</name>
    <name type="ordered locus">GK1653</name>
</gene>
<accession>Q5KZE8</accession>
<name>NPD2_GEOKA</name>
<dbReference type="EC" id="2.3.1.286" evidence="1 2"/>
<dbReference type="EMBL" id="BA000043">
    <property type="protein sequence ID" value="BAD75938.1"/>
    <property type="molecule type" value="Genomic_DNA"/>
</dbReference>
<dbReference type="RefSeq" id="WP_011231148.1">
    <property type="nucleotide sequence ID" value="NC_006510.1"/>
</dbReference>
<dbReference type="SMR" id="Q5KZE8"/>
<dbReference type="STRING" id="235909.GK1653"/>
<dbReference type="KEGG" id="gka:GK1653"/>
<dbReference type="eggNOG" id="COG0846">
    <property type="taxonomic scope" value="Bacteria"/>
</dbReference>
<dbReference type="HOGENOM" id="CLU_023643_3_0_9"/>
<dbReference type="Proteomes" id="UP000001172">
    <property type="component" value="Chromosome"/>
</dbReference>
<dbReference type="GO" id="GO:0005737">
    <property type="term" value="C:cytoplasm"/>
    <property type="evidence" value="ECO:0007669"/>
    <property type="project" value="UniProtKB-SubCell"/>
</dbReference>
<dbReference type="GO" id="GO:0017136">
    <property type="term" value="F:histone deacetylase activity, NAD-dependent"/>
    <property type="evidence" value="ECO:0007669"/>
    <property type="project" value="TreeGrafter"/>
</dbReference>
<dbReference type="GO" id="GO:0070403">
    <property type="term" value="F:NAD+ binding"/>
    <property type="evidence" value="ECO:0007669"/>
    <property type="project" value="UniProtKB-UniRule"/>
</dbReference>
<dbReference type="GO" id="GO:0008270">
    <property type="term" value="F:zinc ion binding"/>
    <property type="evidence" value="ECO:0007669"/>
    <property type="project" value="UniProtKB-UniRule"/>
</dbReference>
<dbReference type="Gene3D" id="3.30.1600.10">
    <property type="entry name" value="SIR2/SIRT2 'Small Domain"/>
    <property type="match status" value="1"/>
</dbReference>
<dbReference type="Gene3D" id="3.40.50.1220">
    <property type="entry name" value="TPP-binding domain"/>
    <property type="match status" value="1"/>
</dbReference>
<dbReference type="HAMAP" id="MF_01968">
    <property type="entry name" value="Sirtuin_ClassU"/>
    <property type="match status" value="1"/>
</dbReference>
<dbReference type="InterPro" id="IPR029035">
    <property type="entry name" value="DHS-like_NAD/FAD-binding_dom"/>
</dbReference>
<dbReference type="InterPro" id="IPR050134">
    <property type="entry name" value="NAD-dep_sirtuin_deacylases"/>
</dbReference>
<dbReference type="InterPro" id="IPR003000">
    <property type="entry name" value="Sirtuin"/>
</dbReference>
<dbReference type="InterPro" id="IPR026591">
    <property type="entry name" value="Sirtuin_cat_small_dom_sf"/>
</dbReference>
<dbReference type="InterPro" id="IPR028628">
    <property type="entry name" value="Sirtuin_class_U"/>
</dbReference>
<dbReference type="InterPro" id="IPR026590">
    <property type="entry name" value="Ssirtuin_cat_dom"/>
</dbReference>
<dbReference type="NCBIfam" id="NF001754">
    <property type="entry name" value="PRK00481.1-4"/>
    <property type="match status" value="1"/>
</dbReference>
<dbReference type="PANTHER" id="PTHR11085:SF4">
    <property type="entry name" value="NAD-DEPENDENT PROTEIN DEACYLASE"/>
    <property type="match status" value="1"/>
</dbReference>
<dbReference type="PANTHER" id="PTHR11085">
    <property type="entry name" value="NAD-DEPENDENT PROTEIN DEACYLASE SIRTUIN-5, MITOCHONDRIAL-RELATED"/>
    <property type="match status" value="1"/>
</dbReference>
<dbReference type="Pfam" id="PF02146">
    <property type="entry name" value="SIR2"/>
    <property type="match status" value="1"/>
</dbReference>
<dbReference type="SUPFAM" id="SSF52467">
    <property type="entry name" value="DHS-like NAD/FAD-binding domain"/>
    <property type="match status" value="1"/>
</dbReference>
<dbReference type="PROSITE" id="PS50305">
    <property type="entry name" value="SIRTUIN"/>
    <property type="match status" value="1"/>
</dbReference>
<keyword id="KW-0963">Cytoplasm</keyword>
<keyword id="KW-0479">Metal-binding</keyword>
<keyword id="KW-0520">NAD</keyword>
<keyword id="KW-1185">Reference proteome</keyword>
<keyword id="KW-0808">Transferase</keyword>
<keyword id="KW-0862">Zinc</keyword>
<comment type="function">
    <text evidence="1">NAD-dependent protein deacetylase which modulates the activities of several enzymes which are inactive in their acetylated form.</text>
</comment>
<comment type="catalytic activity">
    <reaction evidence="1">
        <text>N(6)-acetyl-L-lysyl-[protein] + NAD(+) + H2O = 2''-O-acetyl-ADP-D-ribose + nicotinamide + L-lysyl-[protein]</text>
        <dbReference type="Rhea" id="RHEA:43636"/>
        <dbReference type="Rhea" id="RHEA-COMP:9752"/>
        <dbReference type="Rhea" id="RHEA-COMP:10731"/>
        <dbReference type="ChEBI" id="CHEBI:15377"/>
        <dbReference type="ChEBI" id="CHEBI:17154"/>
        <dbReference type="ChEBI" id="CHEBI:29969"/>
        <dbReference type="ChEBI" id="CHEBI:57540"/>
        <dbReference type="ChEBI" id="CHEBI:61930"/>
        <dbReference type="ChEBI" id="CHEBI:83767"/>
        <dbReference type="EC" id="2.3.1.286"/>
    </reaction>
</comment>
<comment type="cofactor">
    <cofactor evidence="1">
        <name>Zn(2+)</name>
        <dbReference type="ChEBI" id="CHEBI:29105"/>
    </cofactor>
    <text evidence="1">Binds 1 zinc ion per subunit.</text>
</comment>
<comment type="subcellular location">
    <subcellularLocation>
        <location evidence="1">Cytoplasm</location>
    </subcellularLocation>
</comment>
<comment type="similarity">
    <text evidence="1">Belongs to the sirtuin family. Class U subfamily.</text>
</comment>
<sequence length="247" mass="27547">MDQIRQLAQWIKEANTIAVLTGAGMSTESGIPDFRSENGLYAQEDNVEYYLSEYYYKKDPVDFWRRFKRMFSLKMMGGFAPNDGHRFLRWLEEMGKTVTILTQNIDGLHTKAGSTNVIELHGTLQTATCPSCGNKYDLSFINRHEVPRCEKCQTIVKPDVVLFGGLVPRMEEAFAAAAASDLLLAMGTSLEVAPVNQIPFYVAAESPATRKVLINKTATRMDGMFDLVIYGGIGKTVASVRKQIQAE</sequence>
<organism>
    <name type="scientific">Geobacillus kaustophilus (strain HTA426)</name>
    <dbReference type="NCBI Taxonomy" id="235909"/>
    <lineage>
        <taxon>Bacteria</taxon>
        <taxon>Bacillati</taxon>
        <taxon>Bacillota</taxon>
        <taxon>Bacilli</taxon>
        <taxon>Bacillales</taxon>
        <taxon>Anoxybacillaceae</taxon>
        <taxon>Geobacillus</taxon>
        <taxon>Geobacillus thermoleovorans group</taxon>
    </lineage>
</organism>
<reference key="1">
    <citation type="journal article" date="2004" name="Nucleic Acids Res.">
        <title>Thermoadaptation trait revealed by the genome sequence of thermophilic Geobacillus kaustophilus.</title>
        <authorList>
            <person name="Takami H."/>
            <person name="Takaki Y."/>
            <person name="Chee G.-J."/>
            <person name="Nishi S."/>
            <person name="Shimamura S."/>
            <person name="Suzuki H."/>
            <person name="Matsui S."/>
            <person name="Uchiyama I."/>
        </authorList>
    </citation>
    <scope>NUCLEOTIDE SEQUENCE [LARGE SCALE GENOMIC DNA]</scope>
    <source>
        <strain>HTA426</strain>
    </source>
</reference>
<feature type="chain" id="PRO_0000110318" description="NAD-dependent protein deacetylase 2">
    <location>
        <begin position="1"/>
        <end position="247"/>
    </location>
</feature>
<feature type="domain" description="Deacetylase sirtuin-type" evidence="2">
    <location>
        <begin position="1"/>
        <end position="247"/>
    </location>
</feature>
<feature type="active site" description="Proton acceptor" evidence="2">
    <location>
        <position position="121"/>
    </location>
</feature>
<feature type="binding site" evidence="1">
    <location>
        <position position="23"/>
    </location>
    <ligand>
        <name>NAD(+)</name>
        <dbReference type="ChEBI" id="CHEBI:57540"/>
    </ligand>
</feature>
<feature type="binding site" evidence="1">
    <location>
        <position position="27"/>
    </location>
    <ligand>
        <name>NAD(+)</name>
        <dbReference type="ChEBI" id="CHEBI:57540"/>
    </ligand>
</feature>
<feature type="binding site" evidence="1">
    <location>
        <position position="34"/>
    </location>
    <ligand>
        <name>NAD(+)</name>
        <dbReference type="ChEBI" id="CHEBI:57540"/>
    </ligand>
</feature>
<feature type="binding site" evidence="1">
    <location>
        <position position="34"/>
    </location>
    <ligand>
        <name>nicotinamide</name>
        <dbReference type="ChEBI" id="CHEBI:17154"/>
    </ligand>
</feature>
<feature type="binding site" evidence="1">
    <location>
        <position position="35"/>
    </location>
    <ligand>
        <name>NAD(+)</name>
        <dbReference type="ChEBI" id="CHEBI:57540"/>
    </ligand>
</feature>
<feature type="binding site" evidence="1">
    <location>
        <position position="103"/>
    </location>
    <ligand>
        <name>NAD(+)</name>
        <dbReference type="ChEBI" id="CHEBI:57540"/>
    </ligand>
</feature>
<feature type="binding site" evidence="1">
    <location>
        <position position="105"/>
    </location>
    <ligand>
        <name>NAD(+)</name>
        <dbReference type="ChEBI" id="CHEBI:57540"/>
    </ligand>
</feature>
<feature type="binding site" evidence="1">
    <location>
        <position position="105"/>
    </location>
    <ligand>
        <name>nicotinamide</name>
        <dbReference type="ChEBI" id="CHEBI:17154"/>
    </ligand>
</feature>
<feature type="binding site" evidence="1">
    <location>
        <position position="106"/>
    </location>
    <ligand>
        <name>NAD(+)</name>
        <dbReference type="ChEBI" id="CHEBI:57540"/>
    </ligand>
</feature>
<feature type="binding site" evidence="1">
    <location>
        <position position="106"/>
    </location>
    <ligand>
        <name>nicotinamide</name>
        <dbReference type="ChEBI" id="CHEBI:17154"/>
    </ligand>
</feature>
<feature type="binding site" evidence="1">
    <location>
        <position position="121"/>
    </location>
    <ligand>
        <name>NAD(+)</name>
        <dbReference type="ChEBI" id="CHEBI:57540"/>
    </ligand>
</feature>
<feature type="binding site" evidence="1">
    <location>
        <position position="129"/>
    </location>
    <ligand>
        <name>Zn(2+)</name>
        <dbReference type="ChEBI" id="CHEBI:29105"/>
    </ligand>
</feature>
<feature type="binding site" evidence="1">
    <location>
        <position position="132"/>
    </location>
    <ligand>
        <name>Zn(2+)</name>
        <dbReference type="ChEBI" id="CHEBI:29105"/>
    </ligand>
</feature>
<feature type="binding site" evidence="1">
    <location>
        <position position="149"/>
    </location>
    <ligand>
        <name>Zn(2+)</name>
        <dbReference type="ChEBI" id="CHEBI:29105"/>
    </ligand>
</feature>
<feature type="binding site" evidence="1">
    <location>
        <position position="152"/>
    </location>
    <ligand>
        <name>Zn(2+)</name>
        <dbReference type="ChEBI" id="CHEBI:29105"/>
    </ligand>
</feature>
<feature type="binding site" evidence="1">
    <location>
        <position position="188"/>
    </location>
    <ligand>
        <name>NAD(+)</name>
        <dbReference type="ChEBI" id="CHEBI:57540"/>
    </ligand>
</feature>
<feature type="binding site" evidence="1">
    <location>
        <position position="189"/>
    </location>
    <ligand>
        <name>NAD(+)</name>
        <dbReference type="ChEBI" id="CHEBI:57540"/>
    </ligand>
</feature>
<feature type="binding site" evidence="1">
    <location>
        <position position="215"/>
    </location>
    <ligand>
        <name>NAD(+)</name>
        <dbReference type="ChEBI" id="CHEBI:57540"/>
    </ligand>
</feature>
<feature type="binding site" evidence="1">
    <location>
        <position position="233"/>
    </location>
    <ligand>
        <name>NAD(+)</name>
        <dbReference type="ChEBI" id="CHEBI:57540"/>
    </ligand>
</feature>
<proteinExistence type="inferred from homology"/>